<name>AIS_SHISS</name>
<protein>
    <recommendedName>
        <fullName evidence="1">Lipopolysaccharide core heptose(II)-phosphate phosphatase</fullName>
        <ecNumber evidence="1">3.1.3.-</ecNumber>
    </recommendedName>
</protein>
<proteinExistence type="inferred from homology"/>
<comment type="function">
    <text evidence="1">Catalyzes the dephosphorylation of heptose(II) of the outer membrane lipopolysaccharide core.</text>
</comment>
<comment type="pathway">
    <text evidence="1">Bacterial outer membrane biogenesis; lipopolysaccharide metabolism.</text>
</comment>
<comment type="subcellular location">
    <subcellularLocation>
        <location evidence="1">Periplasm</location>
    </subcellularLocation>
</comment>
<comment type="similarity">
    <text evidence="1">Belongs to the phosphoglycerate mutase family. Ais subfamily.</text>
</comment>
<keyword id="KW-0378">Hydrolase</keyword>
<keyword id="KW-0574">Periplasm</keyword>
<keyword id="KW-1185">Reference proteome</keyword>
<keyword id="KW-0732">Signal</keyword>
<sequence>MLAFCRSSLKSKKYFIILLALAAIAGLGTHAAWSSNGLPRIDNKTLARLAQQHPVVVLFRHAERCDRSTNQCLSDKTGITVKGTQDARELGNAFSADIPDFDLYSSNTVRTIQSATWFSAGKKLTVDKRLLQCGNEIYSAIKDLQSKAPDKNIVIFTHNHCLTYIAKNKRDATFKPDYLDGLVMHVEKGKVYLDGEFVNH</sequence>
<gene>
    <name evidence="1" type="primary">ais</name>
    <name type="ordered locus">SSON_2313</name>
</gene>
<organism>
    <name type="scientific">Shigella sonnei (strain Ss046)</name>
    <dbReference type="NCBI Taxonomy" id="300269"/>
    <lineage>
        <taxon>Bacteria</taxon>
        <taxon>Pseudomonadati</taxon>
        <taxon>Pseudomonadota</taxon>
        <taxon>Gammaproteobacteria</taxon>
        <taxon>Enterobacterales</taxon>
        <taxon>Enterobacteriaceae</taxon>
        <taxon>Shigella</taxon>
    </lineage>
</organism>
<dbReference type="EC" id="3.1.3.-" evidence="1"/>
<dbReference type="EMBL" id="CP000038">
    <property type="protein sequence ID" value="AAZ88958.1"/>
    <property type="molecule type" value="Genomic_DNA"/>
</dbReference>
<dbReference type="RefSeq" id="WP_001297077.1">
    <property type="nucleotide sequence ID" value="NC_007384.1"/>
</dbReference>
<dbReference type="SMR" id="Q3YZV4"/>
<dbReference type="GeneID" id="93774922"/>
<dbReference type="KEGG" id="ssn:SSON_2313"/>
<dbReference type="HOGENOM" id="CLU_106705_1_0_6"/>
<dbReference type="UniPathway" id="UPA00451"/>
<dbReference type="Proteomes" id="UP000002529">
    <property type="component" value="Chromosome"/>
</dbReference>
<dbReference type="GO" id="GO:0042597">
    <property type="term" value="C:periplasmic space"/>
    <property type="evidence" value="ECO:0007669"/>
    <property type="project" value="UniProtKB-SubCell"/>
</dbReference>
<dbReference type="GO" id="GO:0016791">
    <property type="term" value="F:phosphatase activity"/>
    <property type="evidence" value="ECO:0007669"/>
    <property type="project" value="UniProtKB-UniRule"/>
</dbReference>
<dbReference type="GO" id="GO:0008653">
    <property type="term" value="P:lipopolysaccharide metabolic process"/>
    <property type="evidence" value="ECO:0007669"/>
    <property type="project" value="UniProtKB-UniRule"/>
</dbReference>
<dbReference type="CDD" id="cd07040">
    <property type="entry name" value="HP"/>
    <property type="match status" value="1"/>
</dbReference>
<dbReference type="Gene3D" id="3.40.50.1240">
    <property type="entry name" value="Phosphoglycerate mutase-like"/>
    <property type="match status" value="1"/>
</dbReference>
<dbReference type="HAMAP" id="MF_01868">
    <property type="entry name" value="Ais"/>
    <property type="match status" value="1"/>
</dbReference>
<dbReference type="InterPro" id="IPR013078">
    <property type="entry name" value="His_Pase_superF_clade-1"/>
</dbReference>
<dbReference type="InterPro" id="IPR029033">
    <property type="entry name" value="His_PPase_superfam"/>
</dbReference>
<dbReference type="InterPro" id="IPR011310">
    <property type="entry name" value="LipoPS_heptP_Pase"/>
</dbReference>
<dbReference type="NCBIfam" id="NF011945">
    <property type="entry name" value="PRK15416.1"/>
    <property type="match status" value="1"/>
</dbReference>
<dbReference type="Pfam" id="PF00300">
    <property type="entry name" value="His_Phos_1"/>
    <property type="match status" value="1"/>
</dbReference>
<dbReference type="PIRSF" id="PIRSF011416">
    <property type="entry name" value="Ais-TraG-AfrS"/>
    <property type="match status" value="1"/>
</dbReference>
<dbReference type="SUPFAM" id="SSF53254">
    <property type="entry name" value="Phosphoglycerate mutase-like"/>
    <property type="match status" value="1"/>
</dbReference>
<feature type="signal peptide" evidence="1">
    <location>
        <begin position="1"/>
        <end position="25"/>
    </location>
</feature>
<feature type="chain" id="PRO_0000380590" description="Lipopolysaccharide core heptose(II)-phosphate phosphatase">
    <location>
        <begin position="26"/>
        <end position="200"/>
    </location>
</feature>
<reference key="1">
    <citation type="journal article" date="2005" name="Nucleic Acids Res.">
        <title>Genome dynamics and diversity of Shigella species, the etiologic agents of bacillary dysentery.</title>
        <authorList>
            <person name="Yang F."/>
            <person name="Yang J."/>
            <person name="Zhang X."/>
            <person name="Chen L."/>
            <person name="Jiang Y."/>
            <person name="Yan Y."/>
            <person name="Tang X."/>
            <person name="Wang J."/>
            <person name="Xiong Z."/>
            <person name="Dong J."/>
            <person name="Xue Y."/>
            <person name="Zhu Y."/>
            <person name="Xu X."/>
            <person name="Sun L."/>
            <person name="Chen S."/>
            <person name="Nie H."/>
            <person name="Peng J."/>
            <person name="Xu J."/>
            <person name="Wang Y."/>
            <person name="Yuan Z."/>
            <person name="Wen Y."/>
            <person name="Yao Z."/>
            <person name="Shen Y."/>
            <person name="Qiang B."/>
            <person name="Hou Y."/>
            <person name="Yu J."/>
            <person name="Jin Q."/>
        </authorList>
    </citation>
    <scope>NUCLEOTIDE SEQUENCE [LARGE SCALE GENOMIC DNA]</scope>
    <source>
        <strain>Ss046</strain>
    </source>
</reference>
<evidence type="ECO:0000255" key="1">
    <source>
        <dbReference type="HAMAP-Rule" id="MF_01868"/>
    </source>
</evidence>
<accession>Q3YZV4</accession>